<name>PETD_CYAM1</name>
<reference key="1">
    <citation type="journal article" date="2003" name="DNA Res.">
        <title>Complete sequence and analysis of the plastid genome of the unicellular red alga Cyanidioschyzon merolae.</title>
        <authorList>
            <person name="Ohta N."/>
            <person name="Matsuzaki M."/>
            <person name="Misumi O."/>
            <person name="Miyagishima S.-Y."/>
            <person name="Nozaki H."/>
            <person name="Tanaka K."/>
            <person name="Shin-i T."/>
            <person name="Kohara Y."/>
            <person name="Kuroiwa T."/>
        </authorList>
    </citation>
    <scope>NUCLEOTIDE SEQUENCE [LARGE SCALE GENOMIC DNA]</scope>
    <source>
        <strain>NIES-3377 / 10D</strain>
    </source>
</reference>
<protein>
    <recommendedName>
        <fullName evidence="2">Cytochrome b6-f complex subunit 4</fullName>
    </recommendedName>
    <alternativeName>
        <fullName evidence="2">17 kDa polypeptide</fullName>
    </alternativeName>
</protein>
<gene>
    <name evidence="2" type="primary">petD</name>
</gene>
<feature type="chain" id="PRO_0000061857" description="Cytochrome b6-f complex subunit 4">
    <location>
        <begin position="1"/>
        <end position="160"/>
    </location>
</feature>
<feature type="transmembrane region" description="Helical" evidence="2">
    <location>
        <begin position="36"/>
        <end position="56"/>
    </location>
</feature>
<feature type="transmembrane region" description="Helical" evidence="2">
    <location>
        <begin position="95"/>
        <end position="115"/>
    </location>
</feature>
<feature type="transmembrane region" description="Helical" evidence="2">
    <location>
        <begin position="127"/>
        <end position="147"/>
    </location>
</feature>
<sequence length="160" mass="17648">MSILKKPDLSDAQLRAKLAKGMGHNMYGEPAWPNDLLYTFPVVILGTITCCIGLALMEPSAIGEAANPFATPLEILPEWYFYPTFNLLRVIPNKLLGVLSMASVPLGLIFVPFIENRNRYQNPWRRPIATTVFLVGTVVTIWLGIGATKSIQDAISLGLF</sequence>
<comment type="function">
    <text evidence="2">Component of the cytochrome b6-f complex, which mediates electron transfer between photosystem II (PSII) and photosystem I (PSI), cyclic electron flow around PSI, and state transitions.</text>
</comment>
<comment type="subunit">
    <text evidence="1">The 4 large subunits of the cytochrome b6-f complex are cytochrome b6, subunit IV (17 kDa polypeptide, petD), cytochrome f and the Rieske protein, while the 4 small subunits are petG, petL, petM and petN. The complex functions as a dimer (By similarity).</text>
</comment>
<comment type="subcellular location">
    <subcellularLocation>
        <location evidence="2">Plastid</location>
        <location evidence="2">Chloroplast thylakoid membrane</location>
        <topology evidence="2">Multi-pass membrane protein</topology>
    </subcellularLocation>
</comment>
<comment type="similarity">
    <text evidence="2">Belongs to the cytochrome b family. PetD subfamily.</text>
</comment>
<organism>
    <name type="scientific">Cyanidioschyzon merolae (strain NIES-3377 / 10D)</name>
    <name type="common">Unicellular red alga</name>
    <dbReference type="NCBI Taxonomy" id="280699"/>
    <lineage>
        <taxon>Eukaryota</taxon>
        <taxon>Rhodophyta</taxon>
        <taxon>Bangiophyceae</taxon>
        <taxon>Cyanidiales</taxon>
        <taxon>Cyanidiaceae</taxon>
        <taxon>Cyanidioschyzon</taxon>
    </lineage>
</organism>
<keyword id="KW-0150">Chloroplast</keyword>
<keyword id="KW-0249">Electron transport</keyword>
<keyword id="KW-0472">Membrane</keyword>
<keyword id="KW-0602">Photosynthesis</keyword>
<keyword id="KW-0934">Plastid</keyword>
<keyword id="KW-1185">Reference proteome</keyword>
<keyword id="KW-0793">Thylakoid</keyword>
<keyword id="KW-0812">Transmembrane</keyword>
<keyword id="KW-1133">Transmembrane helix</keyword>
<keyword id="KW-0813">Transport</keyword>
<evidence type="ECO:0000250" key="1"/>
<evidence type="ECO:0000255" key="2">
    <source>
        <dbReference type="HAMAP-Rule" id="MF_01344"/>
    </source>
</evidence>
<geneLocation type="chloroplast"/>
<dbReference type="EMBL" id="AB002583">
    <property type="protein sequence ID" value="BAC76176.1"/>
    <property type="molecule type" value="Genomic_DNA"/>
</dbReference>
<dbReference type="RefSeq" id="NP_849014.1">
    <property type="nucleotide sequence ID" value="NC_004799.1"/>
</dbReference>
<dbReference type="SMR" id="Q85G15"/>
<dbReference type="STRING" id="280699.Q85G15"/>
<dbReference type="EnsemblPlants" id="CMV097CT">
    <property type="protein sequence ID" value="CMV097CT"/>
    <property type="gene ID" value="CMV097C"/>
</dbReference>
<dbReference type="GeneID" id="844927"/>
<dbReference type="Gramene" id="CMV097CT">
    <property type="protein sequence ID" value="CMV097CT"/>
    <property type="gene ID" value="CMV097C"/>
</dbReference>
<dbReference type="KEGG" id="cme:CymeCp082"/>
<dbReference type="eggNOG" id="KOG4663">
    <property type="taxonomic scope" value="Eukaryota"/>
</dbReference>
<dbReference type="HOGENOM" id="CLU_112652_0_0_1"/>
<dbReference type="Proteomes" id="UP000007014">
    <property type="component" value="Chloroplast"/>
</dbReference>
<dbReference type="GO" id="GO:0009535">
    <property type="term" value="C:chloroplast thylakoid membrane"/>
    <property type="evidence" value="ECO:0007669"/>
    <property type="project" value="UniProtKB-SubCell"/>
</dbReference>
<dbReference type="GO" id="GO:0045158">
    <property type="term" value="F:electron transporter, transferring electrons within cytochrome b6/f complex of photosystem II activity"/>
    <property type="evidence" value="ECO:0007669"/>
    <property type="project" value="UniProtKB-UniRule"/>
</dbReference>
<dbReference type="GO" id="GO:0045156">
    <property type="term" value="F:electron transporter, transferring electrons within the cyclic electron transport pathway of photosynthesis activity"/>
    <property type="evidence" value="ECO:0007669"/>
    <property type="project" value="InterPro"/>
</dbReference>
<dbReference type="GO" id="GO:0016491">
    <property type="term" value="F:oxidoreductase activity"/>
    <property type="evidence" value="ECO:0007669"/>
    <property type="project" value="InterPro"/>
</dbReference>
<dbReference type="GO" id="GO:0009767">
    <property type="term" value="P:photosynthetic electron transport chain"/>
    <property type="evidence" value="ECO:0007669"/>
    <property type="project" value="InterPro"/>
</dbReference>
<dbReference type="CDD" id="cd00290">
    <property type="entry name" value="cytochrome_b_C"/>
    <property type="match status" value="1"/>
</dbReference>
<dbReference type="FunFam" id="1.10.287.980:FF:000001">
    <property type="entry name" value="Cytochrome b6-f complex subunit 4"/>
    <property type="match status" value="1"/>
</dbReference>
<dbReference type="FunFam" id="1.20.5.510:FF:000002">
    <property type="entry name" value="Cytochrome b6-f complex subunit 4"/>
    <property type="match status" value="1"/>
</dbReference>
<dbReference type="Gene3D" id="1.10.287.980">
    <property type="entry name" value="plastocyanin oxidoreductase"/>
    <property type="match status" value="1"/>
</dbReference>
<dbReference type="Gene3D" id="1.20.5.510">
    <property type="entry name" value="Single helix bin"/>
    <property type="match status" value="1"/>
</dbReference>
<dbReference type="HAMAP" id="MF_01344">
    <property type="entry name" value="Cytb6_f_subIV"/>
    <property type="match status" value="1"/>
</dbReference>
<dbReference type="InterPro" id="IPR005798">
    <property type="entry name" value="Cyt_b/b6_C"/>
</dbReference>
<dbReference type="InterPro" id="IPR036150">
    <property type="entry name" value="Cyt_b/b6_C_sf"/>
</dbReference>
<dbReference type="InterPro" id="IPR005870">
    <property type="entry name" value="Cyt_b6/f_cplx_suIV"/>
</dbReference>
<dbReference type="InterPro" id="IPR048260">
    <property type="entry name" value="Cytochrome_b_C_euk/bac"/>
</dbReference>
<dbReference type="NCBIfam" id="TIGR01156">
    <property type="entry name" value="cytb6_f_IV"/>
    <property type="match status" value="1"/>
</dbReference>
<dbReference type="PANTHER" id="PTHR19271">
    <property type="entry name" value="CYTOCHROME B"/>
    <property type="match status" value="1"/>
</dbReference>
<dbReference type="PANTHER" id="PTHR19271:SF40">
    <property type="entry name" value="CYTOCHROME B"/>
    <property type="match status" value="1"/>
</dbReference>
<dbReference type="Pfam" id="PF00032">
    <property type="entry name" value="Cytochrom_B_C"/>
    <property type="match status" value="1"/>
</dbReference>
<dbReference type="PIRSF" id="PIRSF000033">
    <property type="entry name" value="B6f_17K"/>
    <property type="match status" value="1"/>
</dbReference>
<dbReference type="SUPFAM" id="SSF81648">
    <property type="entry name" value="a domain/subunit of cytochrome bc1 complex (Ubiquinol-cytochrome c reductase)"/>
    <property type="match status" value="1"/>
</dbReference>
<dbReference type="PROSITE" id="PS51003">
    <property type="entry name" value="CYTB_CTER"/>
    <property type="match status" value="1"/>
</dbReference>
<proteinExistence type="inferred from homology"/>
<accession>Q85G15</accession>